<comment type="function">
    <text evidence="1">Redox regulated molecular chaperone. Protects both thermally unfolding and oxidatively damaged proteins from irreversible aggregation. Plays an important role in the bacterial defense system toward oxidative stress.</text>
</comment>
<comment type="subcellular location">
    <subcellularLocation>
        <location evidence="1">Cytoplasm</location>
    </subcellularLocation>
</comment>
<comment type="PTM">
    <text evidence="1">Under oxidizing conditions two disulfide bonds are formed involving the reactive cysteines. Under reducing conditions zinc is bound to the reactive cysteines and the protein is inactive.</text>
</comment>
<comment type="similarity">
    <text evidence="1">Belongs to the HSP33 family.</text>
</comment>
<comment type="sequence caution" evidence="2">
    <conflict type="erroneous initiation">
        <sequence resource="EMBL-CDS" id="BAD74349"/>
    </conflict>
</comment>
<proteinExistence type="inferred from homology"/>
<reference key="1">
    <citation type="journal article" date="2004" name="Nucleic Acids Res.">
        <title>Thermoadaptation trait revealed by the genome sequence of thermophilic Geobacillus kaustophilus.</title>
        <authorList>
            <person name="Takami H."/>
            <person name="Takaki Y."/>
            <person name="Chee G.-J."/>
            <person name="Nishi S."/>
            <person name="Shimamura S."/>
            <person name="Suzuki H."/>
            <person name="Matsui S."/>
            <person name="Uchiyama I."/>
        </authorList>
    </citation>
    <scope>NUCLEOTIDE SEQUENCE [LARGE SCALE GENOMIC DNA]</scope>
    <source>
        <strain>HTA426</strain>
    </source>
</reference>
<keyword id="KW-0143">Chaperone</keyword>
<keyword id="KW-0963">Cytoplasm</keyword>
<keyword id="KW-1015">Disulfide bond</keyword>
<keyword id="KW-0676">Redox-active center</keyword>
<keyword id="KW-1185">Reference proteome</keyword>
<keyword id="KW-0862">Zinc</keyword>
<gene>
    <name evidence="1" type="primary">hslO</name>
    <name type="ordered locus">GK0064</name>
</gene>
<sequence>MGDYLVKALAYNGQVRAYAARTTETVAEAQRRHQTWPTASAALGRALTAGVMMGAMLKGEETLTIKIDGGGPIGVILVDSNARGEVRGYVTNPHVHFELNEHGKLDVARAVGKNGMLTVVKDLGLRDFFTGQVPLISGELGDDFTYYFASSEQIPSSVGVGVLVNPDHTIRAAGGFIIQLMPGTEENTITRIEERLKQIPPVSRMIERGLSPEQLLEQLLGDGGVRVLETMPVSFVCRCSRERIADALISLGPEEIQDIIDKEGQAEASCHFCNETYHFDKAELEQLKQLAKKE</sequence>
<name>HSLO_GEOKA</name>
<feature type="chain" id="PRO_0000238067" description="33 kDa chaperonin">
    <location>
        <begin position="1"/>
        <end position="294"/>
    </location>
</feature>
<feature type="disulfide bond" description="Redox-active" evidence="1">
    <location>
        <begin position="237"/>
        <end position="239"/>
    </location>
</feature>
<feature type="disulfide bond" description="Redox-active" evidence="1">
    <location>
        <begin position="270"/>
        <end position="273"/>
    </location>
</feature>
<protein>
    <recommendedName>
        <fullName evidence="1">33 kDa chaperonin</fullName>
    </recommendedName>
    <alternativeName>
        <fullName evidence="1">Heat shock protein 33 homolog</fullName>
        <shortName evidence="1">HSP33</shortName>
    </alternativeName>
</protein>
<accession>Q5L3S9</accession>
<dbReference type="EMBL" id="BA000043">
    <property type="protein sequence ID" value="BAD74349.1"/>
    <property type="status" value="ALT_INIT"/>
    <property type="molecule type" value="Genomic_DNA"/>
</dbReference>
<dbReference type="RefSeq" id="WP_025039044.1">
    <property type="nucleotide sequence ID" value="NC_006510.1"/>
</dbReference>
<dbReference type="SMR" id="Q5L3S9"/>
<dbReference type="STRING" id="235909.GK0064"/>
<dbReference type="GeneID" id="32062041"/>
<dbReference type="KEGG" id="gka:GK0064"/>
<dbReference type="eggNOG" id="COG1281">
    <property type="taxonomic scope" value="Bacteria"/>
</dbReference>
<dbReference type="HOGENOM" id="CLU_054493_1_0_9"/>
<dbReference type="Proteomes" id="UP000001172">
    <property type="component" value="Chromosome"/>
</dbReference>
<dbReference type="GO" id="GO:0005737">
    <property type="term" value="C:cytoplasm"/>
    <property type="evidence" value="ECO:0007669"/>
    <property type="project" value="UniProtKB-SubCell"/>
</dbReference>
<dbReference type="GO" id="GO:0044183">
    <property type="term" value="F:protein folding chaperone"/>
    <property type="evidence" value="ECO:0007669"/>
    <property type="project" value="TreeGrafter"/>
</dbReference>
<dbReference type="GO" id="GO:0051082">
    <property type="term" value="F:unfolded protein binding"/>
    <property type="evidence" value="ECO:0007669"/>
    <property type="project" value="UniProtKB-UniRule"/>
</dbReference>
<dbReference type="GO" id="GO:0042026">
    <property type="term" value="P:protein refolding"/>
    <property type="evidence" value="ECO:0007669"/>
    <property type="project" value="TreeGrafter"/>
</dbReference>
<dbReference type="CDD" id="cd00498">
    <property type="entry name" value="Hsp33"/>
    <property type="match status" value="1"/>
</dbReference>
<dbReference type="Gene3D" id="3.55.30.10">
    <property type="entry name" value="Hsp33 domain"/>
    <property type="match status" value="1"/>
</dbReference>
<dbReference type="Gene3D" id="3.90.1280.10">
    <property type="entry name" value="HSP33 redox switch-like"/>
    <property type="match status" value="1"/>
</dbReference>
<dbReference type="HAMAP" id="MF_00117">
    <property type="entry name" value="HslO"/>
    <property type="match status" value="1"/>
</dbReference>
<dbReference type="InterPro" id="IPR000397">
    <property type="entry name" value="Heat_shock_Hsp33"/>
</dbReference>
<dbReference type="InterPro" id="IPR016154">
    <property type="entry name" value="Heat_shock_Hsp33_C"/>
</dbReference>
<dbReference type="InterPro" id="IPR016153">
    <property type="entry name" value="Heat_shock_Hsp33_N"/>
</dbReference>
<dbReference type="NCBIfam" id="NF001033">
    <property type="entry name" value="PRK00114.1"/>
    <property type="match status" value="1"/>
</dbReference>
<dbReference type="PANTHER" id="PTHR30111">
    <property type="entry name" value="33 KDA CHAPERONIN"/>
    <property type="match status" value="1"/>
</dbReference>
<dbReference type="PANTHER" id="PTHR30111:SF1">
    <property type="entry name" value="33 KDA CHAPERONIN"/>
    <property type="match status" value="1"/>
</dbReference>
<dbReference type="Pfam" id="PF01430">
    <property type="entry name" value="HSP33"/>
    <property type="match status" value="1"/>
</dbReference>
<dbReference type="PIRSF" id="PIRSF005261">
    <property type="entry name" value="Heat_shock_Hsp33"/>
    <property type="match status" value="1"/>
</dbReference>
<dbReference type="SUPFAM" id="SSF64397">
    <property type="entry name" value="Hsp33 domain"/>
    <property type="match status" value="1"/>
</dbReference>
<dbReference type="SUPFAM" id="SSF118352">
    <property type="entry name" value="HSP33 redox switch-like"/>
    <property type="match status" value="1"/>
</dbReference>
<evidence type="ECO:0000255" key="1">
    <source>
        <dbReference type="HAMAP-Rule" id="MF_00117"/>
    </source>
</evidence>
<evidence type="ECO:0000305" key="2"/>
<organism>
    <name type="scientific">Geobacillus kaustophilus (strain HTA426)</name>
    <dbReference type="NCBI Taxonomy" id="235909"/>
    <lineage>
        <taxon>Bacteria</taxon>
        <taxon>Bacillati</taxon>
        <taxon>Bacillota</taxon>
        <taxon>Bacilli</taxon>
        <taxon>Bacillales</taxon>
        <taxon>Anoxybacillaceae</taxon>
        <taxon>Geobacillus</taxon>
        <taxon>Geobacillus thermoleovorans group</taxon>
    </lineage>
</organism>